<protein>
    <recommendedName>
        <fullName evidence="9">Neuroglobin</fullName>
    </recommendedName>
    <alternativeName>
        <fullName evidence="2">Nitrite reductase</fullName>
        <ecNumber evidence="2">1.7.-.-</ecNumber>
    </alternativeName>
</protein>
<organism>
    <name type="scientific">Danio rerio</name>
    <name type="common">Zebrafish</name>
    <name type="synonym">Brachydanio rerio</name>
    <dbReference type="NCBI Taxonomy" id="7955"/>
    <lineage>
        <taxon>Eukaryota</taxon>
        <taxon>Metazoa</taxon>
        <taxon>Chordata</taxon>
        <taxon>Craniata</taxon>
        <taxon>Vertebrata</taxon>
        <taxon>Euteleostomi</taxon>
        <taxon>Actinopterygii</taxon>
        <taxon>Neopterygii</taxon>
        <taxon>Teleostei</taxon>
        <taxon>Ostariophysi</taxon>
        <taxon>Cypriniformes</taxon>
        <taxon>Danionidae</taxon>
        <taxon>Danioninae</taxon>
        <taxon>Danio</taxon>
    </lineage>
</organism>
<proteinExistence type="evidence at protein level"/>
<keyword id="KW-0963">Cytoplasm</keyword>
<keyword id="KW-0349">Heme</keyword>
<keyword id="KW-0408">Iron</keyword>
<keyword id="KW-0479">Metal-binding</keyword>
<keyword id="KW-0496">Mitochondrion</keyword>
<keyword id="KW-0560">Oxidoreductase</keyword>
<keyword id="KW-1185">Reference proteome</keyword>
<name>NGB_DANRE</name>
<accession>Q90YJ2</accession>
<accession>B0R176</accession>
<evidence type="ECO:0000250" key="1">
    <source>
        <dbReference type="UniProtKB" id="Q9ER97"/>
    </source>
</evidence>
<evidence type="ECO:0000250" key="2">
    <source>
        <dbReference type="UniProtKB" id="Q9NPG2"/>
    </source>
</evidence>
<evidence type="ECO:0000255" key="3">
    <source>
        <dbReference type="PROSITE-ProRule" id="PRU00238"/>
    </source>
</evidence>
<evidence type="ECO:0000269" key="4">
    <source>
    </source>
</evidence>
<evidence type="ECO:0000269" key="5">
    <source>
    </source>
</evidence>
<evidence type="ECO:0000269" key="6">
    <source>
    </source>
</evidence>
<evidence type="ECO:0000269" key="7">
    <source>
    </source>
</evidence>
<evidence type="ECO:0000269" key="8">
    <source>
    </source>
</evidence>
<evidence type="ECO:0000303" key="9">
    <source>
    </source>
</evidence>
<dbReference type="EC" id="1.7.-.-" evidence="2"/>
<dbReference type="EMBL" id="AJ315610">
    <property type="protein sequence ID" value="CAC59947.1"/>
    <property type="molecule type" value="mRNA"/>
</dbReference>
<dbReference type="EMBL" id="AL953899">
    <property type="protein sequence ID" value="CAQ15066.1"/>
    <property type="molecule type" value="Genomic_DNA"/>
</dbReference>
<dbReference type="EMBL" id="BC059416">
    <property type="protein sequence ID" value="AAH59416.1"/>
    <property type="molecule type" value="mRNA"/>
</dbReference>
<dbReference type="RefSeq" id="NP_571928.1">
    <property type="nucleotide sequence ID" value="NM_131853.1"/>
</dbReference>
<dbReference type="RefSeq" id="XP_021322757.1">
    <property type="nucleotide sequence ID" value="XM_021467082.2"/>
</dbReference>
<dbReference type="SMR" id="Q90YJ2"/>
<dbReference type="FunCoup" id="Q90YJ2">
    <property type="interactions" value="16"/>
</dbReference>
<dbReference type="STRING" id="7955.ENSDARP00000069992"/>
<dbReference type="PaxDb" id="7955-ENSDARP00000069992"/>
<dbReference type="Ensembl" id="ENSDART00000075510">
    <property type="protein sequence ID" value="ENSDARP00000069992"/>
    <property type="gene ID" value="ENSDARG00000053475"/>
</dbReference>
<dbReference type="Ensembl" id="ENSDART00000165850">
    <property type="protein sequence ID" value="ENSDARP00000137134"/>
    <property type="gene ID" value="ENSDARG00000053475"/>
</dbReference>
<dbReference type="Ensembl" id="ENSDART00000183612">
    <property type="protein sequence ID" value="ENSDARP00000150652"/>
    <property type="gene ID" value="ENSDARG00000116651"/>
</dbReference>
<dbReference type="GeneID" id="100000711"/>
<dbReference type="KEGG" id="dre:100000711"/>
<dbReference type="AGR" id="ZFIN:ZDB-GENE-011102-1"/>
<dbReference type="CTD" id="58157"/>
<dbReference type="ZFIN" id="ZDB-GENE-011102-1">
    <property type="gene designation" value="ngb"/>
</dbReference>
<dbReference type="eggNOG" id="KOG3378">
    <property type="taxonomic scope" value="Eukaryota"/>
</dbReference>
<dbReference type="HOGENOM" id="CLU_003827_13_5_1"/>
<dbReference type="InParanoid" id="Q90YJ2"/>
<dbReference type="OMA" id="GRKLMAM"/>
<dbReference type="OrthoDB" id="436496at2759"/>
<dbReference type="PhylomeDB" id="Q90YJ2"/>
<dbReference type="TreeFam" id="TF333247"/>
<dbReference type="Reactome" id="R-DRE-8981607">
    <property type="pathway name" value="Intracellular oxygen transport"/>
</dbReference>
<dbReference type="PRO" id="PR:Q90YJ2"/>
<dbReference type="Proteomes" id="UP000000437">
    <property type="component" value="Alternate scaffold 17"/>
</dbReference>
<dbReference type="Proteomes" id="UP000000437">
    <property type="component" value="Chromosome 17"/>
</dbReference>
<dbReference type="Bgee" id="ENSDARG00000053475">
    <property type="expression patterns" value="Expressed in brain and 4 other cell types or tissues"/>
</dbReference>
<dbReference type="ExpressionAtlas" id="Q90YJ2">
    <property type="expression patterns" value="baseline and differential"/>
</dbReference>
<dbReference type="GO" id="GO:0005829">
    <property type="term" value="C:cytosol"/>
    <property type="evidence" value="ECO:0007669"/>
    <property type="project" value="UniProtKB-SubCell"/>
</dbReference>
<dbReference type="GO" id="GO:0005759">
    <property type="term" value="C:mitochondrial matrix"/>
    <property type="evidence" value="ECO:0007669"/>
    <property type="project" value="UniProtKB-SubCell"/>
</dbReference>
<dbReference type="GO" id="GO:0005092">
    <property type="term" value="F:GDP-dissociation inhibitor activity"/>
    <property type="evidence" value="ECO:0000250"/>
    <property type="project" value="UniProtKB"/>
</dbReference>
<dbReference type="GO" id="GO:0020037">
    <property type="term" value="F:heme binding"/>
    <property type="evidence" value="ECO:0007669"/>
    <property type="project" value="InterPro"/>
</dbReference>
<dbReference type="GO" id="GO:0046872">
    <property type="term" value="F:metal ion binding"/>
    <property type="evidence" value="ECO:0007669"/>
    <property type="project" value="UniProtKB-KW"/>
</dbReference>
<dbReference type="GO" id="GO:0098809">
    <property type="term" value="F:nitrite reductase activity"/>
    <property type="evidence" value="ECO:0000314"/>
    <property type="project" value="ZFIN"/>
</dbReference>
<dbReference type="GO" id="GO:0019825">
    <property type="term" value="F:oxygen binding"/>
    <property type="evidence" value="ECO:0000314"/>
    <property type="project" value="ZFIN"/>
</dbReference>
<dbReference type="GO" id="GO:0005344">
    <property type="term" value="F:oxygen carrier activity"/>
    <property type="evidence" value="ECO:0000318"/>
    <property type="project" value="GO_Central"/>
</dbReference>
<dbReference type="GO" id="GO:0071456">
    <property type="term" value="P:cellular response to hypoxia"/>
    <property type="evidence" value="ECO:0000250"/>
    <property type="project" value="UniProtKB"/>
</dbReference>
<dbReference type="GO" id="GO:0015671">
    <property type="term" value="P:oxygen transport"/>
    <property type="evidence" value="ECO:0000318"/>
    <property type="project" value="GO_Central"/>
</dbReference>
<dbReference type="GO" id="GO:0001666">
    <property type="term" value="P:response to hypoxia"/>
    <property type="evidence" value="ECO:0000314"/>
    <property type="project" value="ZFIN"/>
</dbReference>
<dbReference type="FunFam" id="1.10.490.10:FF:000006">
    <property type="entry name" value="Neuroglobin"/>
    <property type="match status" value="1"/>
</dbReference>
<dbReference type="Gene3D" id="1.10.490.10">
    <property type="entry name" value="Globins"/>
    <property type="match status" value="1"/>
</dbReference>
<dbReference type="InterPro" id="IPR000971">
    <property type="entry name" value="Globin"/>
</dbReference>
<dbReference type="InterPro" id="IPR050532">
    <property type="entry name" value="Globin-like_OT"/>
</dbReference>
<dbReference type="InterPro" id="IPR009050">
    <property type="entry name" value="Globin-like_sf"/>
</dbReference>
<dbReference type="InterPro" id="IPR012292">
    <property type="entry name" value="Globin/Proto"/>
</dbReference>
<dbReference type="PANTHER" id="PTHR46458">
    <property type="entry name" value="BLR2807 PROTEIN"/>
    <property type="match status" value="1"/>
</dbReference>
<dbReference type="PANTHER" id="PTHR46458:SF19">
    <property type="entry name" value="NEUROGLOBIN"/>
    <property type="match status" value="1"/>
</dbReference>
<dbReference type="Pfam" id="PF00042">
    <property type="entry name" value="Globin"/>
    <property type="match status" value="1"/>
</dbReference>
<dbReference type="PRINTS" id="PR00188">
    <property type="entry name" value="PLANTGLOBIN"/>
</dbReference>
<dbReference type="SUPFAM" id="SSF46458">
    <property type="entry name" value="Globin-like"/>
    <property type="match status" value="1"/>
</dbReference>
<dbReference type="PROSITE" id="PS01033">
    <property type="entry name" value="GLOBIN"/>
    <property type="match status" value="1"/>
</dbReference>
<sequence>MEKLSEKDKGLIRDSWESLGKNKVPHGIVLFTRLFELDPALLTLFSYSTNCGDAPECLSSPEFLEHVTKVMLVIDAAVSHLDDLHTLEDFLLNLGRKHQAVGVNTQSFALVGESLLYMLQSSLGPAYTTSLRQAWLTMYSIVVSAMTRGWAKNGEHKSN</sequence>
<reference key="1">
    <citation type="journal article" date="2001" name="Biochem. Biophys. Res. Commun.">
        <title>Neuroglobins from the zebrafish Danio rerio and the pufferfish Tetraodon nigroviridis.</title>
        <authorList>
            <person name="Awenius C."/>
            <person name="Hankeln T."/>
            <person name="Burmester T."/>
        </authorList>
    </citation>
    <scope>NUCLEOTIDE SEQUENCE [MRNA]</scope>
    <source>
        <tissue>Retina</tissue>
    </source>
</reference>
<reference key="2">
    <citation type="journal article" date="2004" name="J. Biol. Chem.">
        <title>Zebrafish reveals different and conserved features of vertebrate neuroglobin gene structure, expression pattern, and ligand binding.</title>
        <authorList>
            <person name="Fuchs C."/>
            <person name="Heib V."/>
            <person name="Kiger L."/>
            <person name="Haberkamp M."/>
            <person name="Roesner A."/>
            <person name="Schmidt M."/>
            <person name="Hamdane D."/>
            <person name="Marden M.C."/>
            <person name="Hankeln T."/>
            <person name="Burmester T."/>
        </authorList>
    </citation>
    <scope>NUCLEOTIDE SEQUENCE [GENOMIC DNA / MRNA]</scope>
    <scope>FUNCTION</scope>
    <scope>TISSUE SPECIFICITY</scope>
</reference>
<reference key="3">
    <citation type="journal article" date="2013" name="Nature">
        <title>The zebrafish reference genome sequence and its relationship to the human genome.</title>
        <authorList>
            <person name="Howe K."/>
            <person name="Clark M.D."/>
            <person name="Torroja C.F."/>
            <person name="Torrance J."/>
            <person name="Berthelot C."/>
            <person name="Muffato M."/>
            <person name="Collins J.E."/>
            <person name="Humphray S."/>
            <person name="McLaren K."/>
            <person name="Matthews L."/>
            <person name="McLaren S."/>
            <person name="Sealy I."/>
            <person name="Caccamo M."/>
            <person name="Churcher C."/>
            <person name="Scott C."/>
            <person name="Barrett J.C."/>
            <person name="Koch R."/>
            <person name="Rauch G.J."/>
            <person name="White S."/>
            <person name="Chow W."/>
            <person name="Kilian B."/>
            <person name="Quintais L.T."/>
            <person name="Guerra-Assuncao J.A."/>
            <person name="Zhou Y."/>
            <person name="Gu Y."/>
            <person name="Yen J."/>
            <person name="Vogel J.H."/>
            <person name="Eyre T."/>
            <person name="Redmond S."/>
            <person name="Banerjee R."/>
            <person name="Chi J."/>
            <person name="Fu B."/>
            <person name="Langley E."/>
            <person name="Maguire S.F."/>
            <person name="Laird G.K."/>
            <person name="Lloyd D."/>
            <person name="Kenyon E."/>
            <person name="Donaldson S."/>
            <person name="Sehra H."/>
            <person name="Almeida-King J."/>
            <person name="Loveland J."/>
            <person name="Trevanion S."/>
            <person name="Jones M."/>
            <person name="Quail M."/>
            <person name="Willey D."/>
            <person name="Hunt A."/>
            <person name="Burton J."/>
            <person name="Sims S."/>
            <person name="McLay K."/>
            <person name="Plumb B."/>
            <person name="Davis J."/>
            <person name="Clee C."/>
            <person name="Oliver K."/>
            <person name="Clark R."/>
            <person name="Riddle C."/>
            <person name="Elliot D."/>
            <person name="Threadgold G."/>
            <person name="Harden G."/>
            <person name="Ware D."/>
            <person name="Begum S."/>
            <person name="Mortimore B."/>
            <person name="Kerry G."/>
            <person name="Heath P."/>
            <person name="Phillimore B."/>
            <person name="Tracey A."/>
            <person name="Corby N."/>
            <person name="Dunn M."/>
            <person name="Johnson C."/>
            <person name="Wood J."/>
            <person name="Clark S."/>
            <person name="Pelan S."/>
            <person name="Griffiths G."/>
            <person name="Smith M."/>
            <person name="Glithero R."/>
            <person name="Howden P."/>
            <person name="Barker N."/>
            <person name="Lloyd C."/>
            <person name="Stevens C."/>
            <person name="Harley J."/>
            <person name="Holt K."/>
            <person name="Panagiotidis G."/>
            <person name="Lovell J."/>
            <person name="Beasley H."/>
            <person name="Henderson C."/>
            <person name="Gordon D."/>
            <person name="Auger K."/>
            <person name="Wright D."/>
            <person name="Collins J."/>
            <person name="Raisen C."/>
            <person name="Dyer L."/>
            <person name="Leung K."/>
            <person name="Robertson L."/>
            <person name="Ambridge K."/>
            <person name="Leongamornlert D."/>
            <person name="McGuire S."/>
            <person name="Gilderthorp R."/>
            <person name="Griffiths C."/>
            <person name="Manthravadi D."/>
            <person name="Nichol S."/>
            <person name="Barker G."/>
            <person name="Whitehead S."/>
            <person name="Kay M."/>
            <person name="Brown J."/>
            <person name="Murnane C."/>
            <person name="Gray E."/>
            <person name="Humphries M."/>
            <person name="Sycamore N."/>
            <person name="Barker D."/>
            <person name="Saunders D."/>
            <person name="Wallis J."/>
            <person name="Babbage A."/>
            <person name="Hammond S."/>
            <person name="Mashreghi-Mohammadi M."/>
            <person name="Barr L."/>
            <person name="Martin S."/>
            <person name="Wray P."/>
            <person name="Ellington A."/>
            <person name="Matthews N."/>
            <person name="Ellwood M."/>
            <person name="Woodmansey R."/>
            <person name="Clark G."/>
            <person name="Cooper J."/>
            <person name="Tromans A."/>
            <person name="Grafham D."/>
            <person name="Skuce C."/>
            <person name="Pandian R."/>
            <person name="Andrews R."/>
            <person name="Harrison E."/>
            <person name="Kimberley A."/>
            <person name="Garnett J."/>
            <person name="Fosker N."/>
            <person name="Hall R."/>
            <person name="Garner P."/>
            <person name="Kelly D."/>
            <person name="Bird C."/>
            <person name="Palmer S."/>
            <person name="Gehring I."/>
            <person name="Berger A."/>
            <person name="Dooley C.M."/>
            <person name="Ersan-Urun Z."/>
            <person name="Eser C."/>
            <person name="Geiger H."/>
            <person name="Geisler M."/>
            <person name="Karotki L."/>
            <person name="Kirn A."/>
            <person name="Konantz J."/>
            <person name="Konantz M."/>
            <person name="Oberlander M."/>
            <person name="Rudolph-Geiger S."/>
            <person name="Teucke M."/>
            <person name="Lanz C."/>
            <person name="Raddatz G."/>
            <person name="Osoegawa K."/>
            <person name="Zhu B."/>
            <person name="Rapp A."/>
            <person name="Widaa S."/>
            <person name="Langford C."/>
            <person name="Yang F."/>
            <person name="Schuster S.C."/>
            <person name="Carter N.P."/>
            <person name="Harrow J."/>
            <person name="Ning Z."/>
            <person name="Herrero J."/>
            <person name="Searle S.M."/>
            <person name="Enright A."/>
            <person name="Geisler R."/>
            <person name="Plasterk R.H."/>
            <person name="Lee C."/>
            <person name="Westerfield M."/>
            <person name="de Jong P.J."/>
            <person name="Zon L.I."/>
            <person name="Postlethwait J.H."/>
            <person name="Nusslein-Volhard C."/>
            <person name="Hubbard T.J."/>
            <person name="Roest Crollius H."/>
            <person name="Rogers J."/>
            <person name="Stemple D.L."/>
        </authorList>
    </citation>
    <scope>NUCLEOTIDE SEQUENCE [LARGE SCALE GENOMIC DNA]</scope>
    <source>
        <strain>Tuebingen</strain>
    </source>
</reference>
<reference key="4">
    <citation type="submission" date="2003-10" db="EMBL/GenBank/DDBJ databases">
        <authorList>
            <consortium name="NIH - Zebrafish Gene Collection (ZGC) project"/>
        </authorList>
    </citation>
    <scope>NUCLEOTIDE SEQUENCE [LARGE SCALE MRNA]</scope>
    <source>
        <tissue>Retina</tissue>
    </source>
</reference>
<reference key="5">
    <citation type="journal article" date="2006" name="J. Exp. Biol.">
        <title>Hypoxia induces a complex response of globin expression in zebrafish (Danio rerio).</title>
        <authorList>
            <person name="Roesner A."/>
            <person name="Hankeln T."/>
            <person name="Burmester T."/>
        </authorList>
    </citation>
    <scope>TISSUE SPECIFICITY</scope>
    <scope>INDUCTION BY HYPOXIA</scope>
</reference>
<reference key="6">
    <citation type="journal article" date="2008" name="Biochemistry">
        <title>Zebrafish neuroglobin is a cell-membrane-penetrating globin.</title>
        <authorList>
            <person name="Watanabe S."/>
            <person name="Wakasugi K."/>
        </authorList>
    </citation>
    <scope>SUBCELLULAR LOCATION</scope>
</reference>
<reference key="7">
    <citation type="journal article" date="2010" name="FEBS Lett.">
        <title>Identification of residues critical for the cell-membrane-penetrating activity of zebrafish neuroglobin.</title>
        <authorList>
            <person name="Watanabe S."/>
            <person name="Wakasugi K."/>
        </authorList>
    </citation>
    <scope>SUBCELLULAR LOCATION</scope>
    <scope>MUTAGENESIS OF LYS-3; LYS-7; LYS-9; ARG-13; LYS-21 AND LYS-23</scope>
</reference>
<reference key="8">
    <citation type="journal article" date="2011" name="J. Comp. Physiol. B">
        <title>Ontogeny of globin expression in zebrafish (Danio rerio).</title>
        <authorList>
            <person name="Tiedke J."/>
            <person name="Gerlach F."/>
            <person name="Mitz S.A."/>
            <person name="Hankeln T."/>
            <person name="Burmester T."/>
        </authorList>
    </citation>
    <scope>DEVELOPMENTAL STAGE</scope>
</reference>
<comment type="function">
    <text evidence="2 4">Monomeric globin with a bis-histidyl six-coordinate heme-iron atom through which it can bind dioxygen, carbon monoxide and nitric oxide (PubMed:15140880). Could help transport oxygen and increase its availability to the metabolically active neuronal tissues, though its low quantity in tissues as well as its high affinity for dioxygen, which may limit its oxygen-releasing ability, argue against it. The ferrous/deoxygenated form exhibits a nitrite reductase activity and it could produce nitric oxide which in turn inhibits cellular respiration in response to hypoxia. In its ferrous/deoxygenated state, it may also exhibit GDI (Guanine nucleotide Dissociation Inhibitor) activity toward heterotrimeric G-alpha proteins, thereby regulating signal transduction to facilitate neuroprotective responses in the wake of hypoxia and associated oxidative stress (By similarity).</text>
</comment>
<comment type="catalytic activity">
    <reaction evidence="2">
        <text>Fe(III)-heme b-[protein] + nitric oxide + H2O = Fe(II)-heme b-[protein] + nitrite + 2 H(+)</text>
        <dbReference type="Rhea" id="RHEA:77711"/>
        <dbReference type="Rhea" id="RHEA-COMP:18975"/>
        <dbReference type="Rhea" id="RHEA-COMP:18976"/>
        <dbReference type="ChEBI" id="CHEBI:15377"/>
        <dbReference type="ChEBI" id="CHEBI:15378"/>
        <dbReference type="ChEBI" id="CHEBI:16301"/>
        <dbReference type="ChEBI" id="CHEBI:16480"/>
        <dbReference type="ChEBI" id="CHEBI:55376"/>
        <dbReference type="ChEBI" id="CHEBI:60344"/>
    </reaction>
    <physiologicalReaction direction="right-to-left" evidence="2">
        <dbReference type="Rhea" id="RHEA:77713"/>
    </physiologicalReaction>
</comment>
<comment type="subunit">
    <text evidence="1 2">Monomer (By similarity). Homodimers and homotetramers. Mainly monomeric but also detected as part of homodimers and homotetramers (By similarity).</text>
</comment>
<comment type="subcellular location">
    <subcellularLocation>
        <location evidence="1">Cytoplasm</location>
        <location evidence="1">Cytosol</location>
    </subcellularLocation>
    <subcellularLocation>
        <location evidence="1">Mitochondrion matrix</location>
    </subcellularLocation>
    <text evidence="1 6 7">Enriched in mitochondrial matrix upon oxygen-glucose deprivation (By similarity). Could have a membrane transducing activity allowing its translocation into cells (PubMed:18416560, PubMed:20417633).</text>
</comment>
<comment type="tissue specificity">
    <text evidence="4 5">Detected in brain, eye and gill, but not in muscle and blood (at protein level). Particularly high expression in the periventral zone of tectum opticum, with significant expression detected in white matter, preglomerular nucleus, posterior tubular nucleus, torus longitudinalis, hypothalamus, pituitary gland, posterior tuberculum, hypothalamus, synencephalon and formatio reticularis. Detected also in brain regions of the visual system, predominantly in parts of tectum opticum and torus semicircularis, area dorsalis telencephali and medulla oblongata. Strong expression observed in sensory epithelium of peripheral olfactory organ, and outer and inner nuclear layers and ganglion cell layer of retina.</text>
</comment>
<comment type="developmental stage">
    <text evidence="8">Expressed at low levels during the early stages of development, with levels increasing strongly around hatching period at 72 hours post-fertilization. Expression levels remain high in the adult stage.</text>
</comment>
<comment type="induction">
    <text evidence="5">Expression is significantly up-regulated by severe hypoxia in brain but not in eye.</text>
</comment>
<comment type="similarity">
    <text evidence="3">Belongs to the globin family.</text>
</comment>
<gene>
    <name type="primary">ngb</name>
    <name type="ORF">si:ch211-233n24.2</name>
</gene>
<feature type="chain" id="PRO_0000053398" description="Neuroglobin">
    <location>
        <begin position="1"/>
        <end position="159"/>
    </location>
</feature>
<feature type="domain" description="Globin" evidence="3">
    <location>
        <begin position="3"/>
        <end position="151"/>
    </location>
</feature>
<feature type="binding site" description="distal binding residue; reversible" evidence="2 3">
    <location>
        <position position="66"/>
    </location>
    <ligand>
        <name>heme b</name>
        <dbReference type="ChEBI" id="CHEBI:60344"/>
    </ligand>
    <ligandPart>
        <name>Fe</name>
        <dbReference type="ChEBI" id="CHEBI:18248"/>
    </ligandPart>
</feature>
<feature type="binding site" description="proximal binding residue" evidence="2 3">
    <location>
        <position position="98"/>
    </location>
    <ligand>
        <name>heme b</name>
        <dbReference type="ChEBI" id="CHEBI:60344"/>
    </ligand>
    <ligandPart>
        <name>Fe</name>
        <dbReference type="ChEBI" id="CHEBI:18248"/>
    </ligandPart>
</feature>
<feature type="mutagenesis site" description="No effect on membrane transducing activity." evidence="7">
    <original>K</original>
    <variation>A</variation>
    <location>
        <position position="3"/>
    </location>
</feature>
<feature type="mutagenesis site" description="Reduced membrane transducing activity. Loss of membrane transducing activity; when associated with Q-9." evidence="7">
    <original>K</original>
    <variation>A</variation>
    <location>
        <position position="7"/>
    </location>
</feature>
<feature type="mutagenesis site" description="Reduced membrane transducing activity. Loss of membrane transducing activity; when associated with A-7." evidence="7">
    <original>K</original>
    <variation>Q</variation>
    <location>
        <position position="9"/>
    </location>
</feature>
<feature type="mutagenesis site" description="No effect on membrane transducing activity." evidence="7">
    <original>R</original>
    <variation>A</variation>
    <location>
        <position position="13"/>
    </location>
</feature>
<feature type="mutagenesis site" description="Reduced membrane transducing activity. Loss of membrane transducing activity; when associated with Q-23." evidence="7">
    <original>K</original>
    <variation>Q</variation>
    <location>
        <position position="21"/>
    </location>
</feature>
<feature type="mutagenesis site" description="Reduced membrane transducing activity. Loss of membrane transducing activity; when associated with Q-21." evidence="7">
    <original>K</original>
    <variation>Q</variation>
    <location>
        <position position="23"/>
    </location>
</feature>